<feature type="chain" id="PRO_1000135841" description="3-isopropylmalate dehydratase small subunit">
    <location>
        <begin position="1"/>
        <end position="215"/>
    </location>
</feature>
<dbReference type="EC" id="4.2.1.33" evidence="1"/>
<dbReference type="EMBL" id="CP000941">
    <property type="protein sequence ID" value="ACA12454.1"/>
    <property type="molecule type" value="Genomic_DNA"/>
</dbReference>
<dbReference type="RefSeq" id="WP_004085788.1">
    <property type="nucleotide sequence ID" value="NC_010513.1"/>
</dbReference>
<dbReference type="SMR" id="B0U3M5"/>
<dbReference type="KEGG" id="xfm:Xfasm12_1541"/>
<dbReference type="HOGENOM" id="CLU_081378_0_3_6"/>
<dbReference type="UniPathway" id="UPA00048">
    <property type="reaction ID" value="UER00071"/>
</dbReference>
<dbReference type="GO" id="GO:0009316">
    <property type="term" value="C:3-isopropylmalate dehydratase complex"/>
    <property type="evidence" value="ECO:0007669"/>
    <property type="project" value="InterPro"/>
</dbReference>
<dbReference type="GO" id="GO:0003861">
    <property type="term" value="F:3-isopropylmalate dehydratase activity"/>
    <property type="evidence" value="ECO:0007669"/>
    <property type="project" value="UniProtKB-UniRule"/>
</dbReference>
<dbReference type="GO" id="GO:0009098">
    <property type="term" value="P:L-leucine biosynthetic process"/>
    <property type="evidence" value="ECO:0007669"/>
    <property type="project" value="UniProtKB-UniRule"/>
</dbReference>
<dbReference type="CDD" id="cd01577">
    <property type="entry name" value="IPMI_Swivel"/>
    <property type="match status" value="1"/>
</dbReference>
<dbReference type="FunFam" id="3.20.19.10:FF:000003">
    <property type="entry name" value="3-isopropylmalate dehydratase small subunit"/>
    <property type="match status" value="1"/>
</dbReference>
<dbReference type="Gene3D" id="3.20.19.10">
    <property type="entry name" value="Aconitase, domain 4"/>
    <property type="match status" value="1"/>
</dbReference>
<dbReference type="HAMAP" id="MF_01031">
    <property type="entry name" value="LeuD_type1"/>
    <property type="match status" value="1"/>
</dbReference>
<dbReference type="InterPro" id="IPR004431">
    <property type="entry name" value="3-IsopropMal_deHydase_ssu"/>
</dbReference>
<dbReference type="InterPro" id="IPR015928">
    <property type="entry name" value="Aconitase/3IPM_dehydase_swvl"/>
</dbReference>
<dbReference type="InterPro" id="IPR000573">
    <property type="entry name" value="AconitaseA/IPMdHydase_ssu_swvl"/>
</dbReference>
<dbReference type="InterPro" id="IPR033940">
    <property type="entry name" value="IPMI_Swivel"/>
</dbReference>
<dbReference type="InterPro" id="IPR050075">
    <property type="entry name" value="LeuD"/>
</dbReference>
<dbReference type="NCBIfam" id="TIGR00171">
    <property type="entry name" value="leuD"/>
    <property type="match status" value="1"/>
</dbReference>
<dbReference type="NCBIfam" id="NF002458">
    <property type="entry name" value="PRK01641.1"/>
    <property type="match status" value="1"/>
</dbReference>
<dbReference type="PANTHER" id="PTHR43345:SF5">
    <property type="entry name" value="3-ISOPROPYLMALATE DEHYDRATASE SMALL SUBUNIT"/>
    <property type="match status" value="1"/>
</dbReference>
<dbReference type="PANTHER" id="PTHR43345">
    <property type="entry name" value="3-ISOPROPYLMALATE DEHYDRATASE SMALL SUBUNIT 2-RELATED-RELATED"/>
    <property type="match status" value="1"/>
</dbReference>
<dbReference type="Pfam" id="PF00694">
    <property type="entry name" value="Aconitase_C"/>
    <property type="match status" value="1"/>
</dbReference>
<dbReference type="SUPFAM" id="SSF52016">
    <property type="entry name" value="LeuD/IlvD-like"/>
    <property type="match status" value="1"/>
</dbReference>
<evidence type="ECO:0000255" key="1">
    <source>
        <dbReference type="HAMAP-Rule" id="MF_01031"/>
    </source>
</evidence>
<sequence length="215" mass="24259">MKPFTQHTGLVCPLDRVNVDTDQIIPKQFLKSIKRTGFGPNLFDEWRYLDAGQPGQDNSKRPINSDFVLNLPRYRGASVLLARDNFGCGSSREHAAWALDEYGFRTVIAPSFADIFFNNSFKNGLLPLVLNKVEVDALFAQCQVTEGYTLTVDLAAQQVITPDGTTYAFQIDTFRKHCLLNGLDDIGLTLQYAEAIRAFEATHRIRQPWLFAPLR</sequence>
<name>LEUD_XYLFM</name>
<keyword id="KW-0028">Amino-acid biosynthesis</keyword>
<keyword id="KW-0100">Branched-chain amino acid biosynthesis</keyword>
<keyword id="KW-0432">Leucine biosynthesis</keyword>
<keyword id="KW-0456">Lyase</keyword>
<comment type="function">
    <text evidence="1">Catalyzes the isomerization between 2-isopropylmalate and 3-isopropylmalate, via the formation of 2-isopropylmaleate.</text>
</comment>
<comment type="catalytic activity">
    <reaction evidence="1">
        <text>(2R,3S)-3-isopropylmalate = (2S)-2-isopropylmalate</text>
        <dbReference type="Rhea" id="RHEA:32287"/>
        <dbReference type="ChEBI" id="CHEBI:1178"/>
        <dbReference type="ChEBI" id="CHEBI:35121"/>
        <dbReference type="EC" id="4.2.1.33"/>
    </reaction>
</comment>
<comment type="pathway">
    <text evidence="1">Amino-acid biosynthesis; L-leucine biosynthesis; L-leucine from 3-methyl-2-oxobutanoate: step 2/4.</text>
</comment>
<comment type="subunit">
    <text evidence="1">Heterodimer of LeuC and LeuD.</text>
</comment>
<comment type="similarity">
    <text evidence="1">Belongs to the LeuD family. LeuD type 1 subfamily.</text>
</comment>
<organism>
    <name type="scientific">Xylella fastidiosa (strain M12)</name>
    <dbReference type="NCBI Taxonomy" id="405440"/>
    <lineage>
        <taxon>Bacteria</taxon>
        <taxon>Pseudomonadati</taxon>
        <taxon>Pseudomonadota</taxon>
        <taxon>Gammaproteobacteria</taxon>
        <taxon>Lysobacterales</taxon>
        <taxon>Lysobacteraceae</taxon>
        <taxon>Xylella</taxon>
    </lineage>
</organism>
<gene>
    <name evidence="1" type="primary">leuD</name>
    <name type="ordered locus">Xfasm12_1541</name>
</gene>
<protein>
    <recommendedName>
        <fullName evidence="1">3-isopropylmalate dehydratase small subunit</fullName>
        <ecNumber evidence="1">4.2.1.33</ecNumber>
    </recommendedName>
    <alternativeName>
        <fullName evidence="1">Alpha-IPM isomerase</fullName>
        <shortName evidence="1">IPMI</shortName>
    </alternativeName>
    <alternativeName>
        <fullName evidence="1">Isopropylmalate isomerase</fullName>
    </alternativeName>
</protein>
<reference key="1">
    <citation type="journal article" date="2010" name="J. Bacteriol.">
        <title>Whole genome sequences of two Xylella fastidiosa strains (M12 and M23) causing almond leaf scorch disease in California.</title>
        <authorList>
            <person name="Chen J."/>
            <person name="Xie G."/>
            <person name="Han S."/>
            <person name="Chertkov O."/>
            <person name="Sims D."/>
            <person name="Civerolo E.L."/>
        </authorList>
    </citation>
    <scope>NUCLEOTIDE SEQUENCE [LARGE SCALE GENOMIC DNA]</scope>
    <source>
        <strain>M12</strain>
    </source>
</reference>
<accession>B0U3M5</accession>
<proteinExistence type="inferred from homology"/>